<reference key="1">
    <citation type="journal article" date="2007" name="PLoS Genet.">
        <title>Patterns and implications of gene gain and loss in the evolution of Prochlorococcus.</title>
        <authorList>
            <person name="Kettler G.C."/>
            <person name="Martiny A.C."/>
            <person name="Huang K."/>
            <person name="Zucker J."/>
            <person name="Coleman M.L."/>
            <person name="Rodrigue S."/>
            <person name="Chen F."/>
            <person name="Lapidus A."/>
            <person name="Ferriera S."/>
            <person name="Johnson J."/>
            <person name="Steglich C."/>
            <person name="Church G.M."/>
            <person name="Richardson P."/>
            <person name="Chisholm S.W."/>
        </authorList>
    </citation>
    <scope>NUCLEOTIDE SEQUENCE [LARGE SCALE GENOMIC DNA]</scope>
    <source>
        <strain>NATL2A</strain>
    </source>
</reference>
<feature type="chain" id="PRO_0000358171" description="NAD(P)H-quinone oxidoreductase subunit J">
    <location>
        <begin position="1"/>
        <end position="173"/>
    </location>
</feature>
<accession>Q46H82</accession>
<dbReference type="EC" id="7.1.1.-" evidence="1"/>
<dbReference type="EMBL" id="CP000095">
    <property type="protein sequence ID" value="AAZ59146.1"/>
    <property type="molecule type" value="Genomic_DNA"/>
</dbReference>
<dbReference type="RefSeq" id="WP_011294291.1">
    <property type="nucleotide sequence ID" value="NC_007335.2"/>
</dbReference>
<dbReference type="SMR" id="Q46H82"/>
<dbReference type="STRING" id="59920.PMN2A_1658"/>
<dbReference type="DNASU" id="3607059"/>
<dbReference type="KEGG" id="pmn:PMN2A_1658"/>
<dbReference type="HOGENOM" id="CLU_042628_9_1_3"/>
<dbReference type="OrthoDB" id="9803286at2"/>
<dbReference type="PhylomeDB" id="Q46H82"/>
<dbReference type="Proteomes" id="UP000002535">
    <property type="component" value="Chromosome"/>
</dbReference>
<dbReference type="GO" id="GO:0031676">
    <property type="term" value="C:plasma membrane-derived thylakoid membrane"/>
    <property type="evidence" value="ECO:0007669"/>
    <property type="project" value="UniProtKB-SubCell"/>
</dbReference>
<dbReference type="GO" id="GO:0008137">
    <property type="term" value="F:NADH dehydrogenase (ubiquinone) activity"/>
    <property type="evidence" value="ECO:0007669"/>
    <property type="project" value="InterPro"/>
</dbReference>
<dbReference type="GO" id="GO:0048038">
    <property type="term" value="F:quinone binding"/>
    <property type="evidence" value="ECO:0007669"/>
    <property type="project" value="UniProtKB-KW"/>
</dbReference>
<dbReference type="GO" id="GO:0019684">
    <property type="term" value="P:photosynthesis, light reaction"/>
    <property type="evidence" value="ECO:0007669"/>
    <property type="project" value="UniProtKB-UniRule"/>
</dbReference>
<dbReference type="Gene3D" id="3.30.460.80">
    <property type="entry name" value="NADH:ubiquinone oxidoreductase, 30kDa subunit"/>
    <property type="match status" value="1"/>
</dbReference>
<dbReference type="HAMAP" id="MF_01357">
    <property type="entry name" value="NDH1_NuoC"/>
    <property type="match status" value="1"/>
</dbReference>
<dbReference type="InterPro" id="IPR010218">
    <property type="entry name" value="NADH_DH_suC"/>
</dbReference>
<dbReference type="InterPro" id="IPR037232">
    <property type="entry name" value="NADH_quin_OxRdtase_su_C/D-like"/>
</dbReference>
<dbReference type="InterPro" id="IPR001268">
    <property type="entry name" value="NADH_UbQ_OxRdtase_30kDa_su"/>
</dbReference>
<dbReference type="InterPro" id="IPR020396">
    <property type="entry name" value="NADH_UbQ_OxRdtase_CS"/>
</dbReference>
<dbReference type="NCBIfam" id="NF009141">
    <property type="entry name" value="PRK12494.1"/>
    <property type="match status" value="1"/>
</dbReference>
<dbReference type="PANTHER" id="PTHR10884:SF14">
    <property type="entry name" value="NADH DEHYDROGENASE [UBIQUINONE] IRON-SULFUR PROTEIN 3, MITOCHONDRIAL"/>
    <property type="match status" value="1"/>
</dbReference>
<dbReference type="PANTHER" id="PTHR10884">
    <property type="entry name" value="NADH DEHYDROGENASE UBIQUINONE IRON-SULFUR PROTEIN 3"/>
    <property type="match status" value="1"/>
</dbReference>
<dbReference type="Pfam" id="PF00329">
    <property type="entry name" value="Complex1_30kDa"/>
    <property type="match status" value="1"/>
</dbReference>
<dbReference type="SUPFAM" id="SSF143243">
    <property type="entry name" value="Nqo5-like"/>
    <property type="match status" value="1"/>
</dbReference>
<dbReference type="PROSITE" id="PS00542">
    <property type="entry name" value="COMPLEX1_30K"/>
    <property type="match status" value="1"/>
</dbReference>
<organism>
    <name type="scientific">Prochlorococcus marinus (strain NATL2A)</name>
    <dbReference type="NCBI Taxonomy" id="59920"/>
    <lineage>
        <taxon>Bacteria</taxon>
        <taxon>Bacillati</taxon>
        <taxon>Cyanobacteriota</taxon>
        <taxon>Cyanophyceae</taxon>
        <taxon>Synechococcales</taxon>
        <taxon>Prochlorococcaceae</taxon>
        <taxon>Prochlorococcus</taxon>
    </lineage>
</organism>
<name>NDHJ_PROMT</name>
<gene>
    <name evidence="1" type="primary">ndhJ</name>
    <name type="ordered locus">PMN2A_1658</name>
</gene>
<comment type="function">
    <text evidence="1">NDH-1 shuttles electrons from an unknown electron donor, via FMN and iron-sulfur (Fe-S) centers, to quinones in the respiratory and/or the photosynthetic chain. The immediate electron acceptor for the enzyme in this species is believed to be plastoquinone. Couples the redox reaction to proton translocation, and thus conserves the redox energy in a proton gradient. Cyanobacterial NDH-1 also plays a role in inorganic carbon-concentration.</text>
</comment>
<comment type="catalytic activity">
    <reaction evidence="1">
        <text>a plastoquinone + NADH + (n+1) H(+)(in) = a plastoquinol + NAD(+) + n H(+)(out)</text>
        <dbReference type="Rhea" id="RHEA:42608"/>
        <dbReference type="Rhea" id="RHEA-COMP:9561"/>
        <dbReference type="Rhea" id="RHEA-COMP:9562"/>
        <dbReference type="ChEBI" id="CHEBI:15378"/>
        <dbReference type="ChEBI" id="CHEBI:17757"/>
        <dbReference type="ChEBI" id="CHEBI:57540"/>
        <dbReference type="ChEBI" id="CHEBI:57945"/>
        <dbReference type="ChEBI" id="CHEBI:62192"/>
    </reaction>
</comment>
<comment type="catalytic activity">
    <reaction evidence="1">
        <text>a plastoquinone + NADPH + (n+1) H(+)(in) = a plastoquinol + NADP(+) + n H(+)(out)</text>
        <dbReference type="Rhea" id="RHEA:42612"/>
        <dbReference type="Rhea" id="RHEA-COMP:9561"/>
        <dbReference type="Rhea" id="RHEA-COMP:9562"/>
        <dbReference type="ChEBI" id="CHEBI:15378"/>
        <dbReference type="ChEBI" id="CHEBI:17757"/>
        <dbReference type="ChEBI" id="CHEBI:57783"/>
        <dbReference type="ChEBI" id="CHEBI:58349"/>
        <dbReference type="ChEBI" id="CHEBI:62192"/>
    </reaction>
</comment>
<comment type="subunit">
    <text evidence="1">NDH-1 can be composed of about 15 different subunits; different subcomplexes with different compositions have been identified which probably have different functions.</text>
</comment>
<comment type="subcellular location">
    <subcellularLocation>
        <location evidence="1">Cellular thylakoid membrane</location>
        <topology evidence="1">Peripheral membrane protein</topology>
        <orientation evidence="1">Cytoplasmic side</orientation>
    </subcellularLocation>
</comment>
<comment type="similarity">
    <text evidence="1">Belongs to the complex I 30 kDa subunit family.</text>
</comment>
<protein>
    <recommendedName>
        <fullName evidence="1">NAD(P)H-quinone oxidoreductase subunit J</fullName>
        <ecNumber evidence="1">7.1.1.-</ecNumber>
    </recommendedName>
    <alternativeName>
        <fullName>NAD(P)H dehydrogenase subunit J</fullName>
    </alternativeName>
    <alternativeName>
        <fullName evidence="1">NADH-plastoquinone oxidoreductase subunit J</fullName>
    </alternativeName>
    <alternativeName>
        <fullName evidence="1">NDH-1 subunit J</fullName>
        <shortName evidence="1">NDH-J</shortName>
    </alternativeName>
</protein>
<keyword id="KW-0472">Membrane</keyword>
<keyword id="KW-0520">NAD</keyword>
<keyword id="KW-0521">NADP</keyword>
<keyword id="KW-0618">Plastoquinone</keyword>
<keyword id="KW-0874">Quinone</keyword>
<keyword id="KW-1185">Reference proteome</keyword>
<keyword id="KW-0793">Thylakoid</keyword>
<keyword id="KW-1278">Translocase</keyword>
<keyword id="KW-0813">Transport</keyword>
<sequence length="173" mass="20093">MTNDSEIVVEEKISGPISDWLSNNGFENIPLKEDHLGIEVIKISPNNLLTIVEALKNDGFNYLQCQGGYDEGPGLNIVCFYNLIEMNELKEDISPREVRLKVFLDRNGDLTVPSLYSLFRGADWQERETFDMYGVNFQGHPHPKRLLMPEDWKGWPLRKDYVQPDFYEMQDAY</sequence>
<proteinExistence type="inferred from homology"/>
<evidence type="ECO:0000255" key="1">
    <source>
        <dbReference type="HAMAP-Rule" id="MF_01357"/>
    </source>
</evidence>